<keyword id="KW-0175">Coiled coil</keyword>
<keyword id="KW-0496">Mitochondrion</keyword>
<keyword id="KW-1185">Reference proteome</keyword>
<keyword id="KW-0687">Ribonucleoprotein</keyword>
<keyword id="KW-0689">Ribosomal protein</keyword>
<keyword id="KW-0809">Transit peptide</keyword>
<dbReference type="EMBL" id="CR382122">
    <property type="protein sequence ID" value="CAH02158.1"/>
    <property type="molecule type" value="Genomic_DNA"/>
</dbReference>
<dbReference type="RefSeq" id="XP_451765.1">
    <property type="nucleotide sequence ID" value="XM_451765.1"/>
</dbReference>
<dbReference type="SMR" id="Q6CWC4"/>
<dbReference type="FunCoup" id="Q6CWC4">
    <property type="interactions" value="271"/>
</dbReference>
<dbReference type="STRING" id="284590.Q6CWC4"/>
<dbReference type="PaxDb" id="284590-Q6CWC4"/>
<dbReference type="KEGG" id="kla:KLLA0_B05181g"/>
<dbReference type="eggNOG" id="KOG3331">
    <property type="taxonomic scope" value="Eukaryota"/>
</dbReference>
<dbReference type="HOGENOM" id="CLU_872105_0_0_1"/>
<dbReference type="InParanoid" id="Q6CWC4"/>
<dbReference type="OMA" id="IRTTMWR"/>
<dbReference type="Proteomes" id="UP000000598">
    <property type="component" value="Chromosome B"/>
</dbReference>
<dbReference type="GO" id="GO:0005762">
    <property type="term" value="C:mitochondrial large ribosomal subunit"/>
    <property type="evidence" value="ECO:0007669"/>
    <property type="project" value="TreeGrafter"/>
</dbReference>
<dbReference type="GO" id="GO:0003735">
    <property type="term" value="F:structural constituent of ribosome"/>
    <property type="evidence" value="ECO:0007669"/>
    <property type="project" value="InterPro"/>
</dbReference>
<dbReference type="GO" id="GO:0032543">
    <property type="term" value="P:mitochondrial translation"/>
    <property type="evidence" value="ECO:0007669"/>
    <property type="project" value="TreeGrafter"/>
</dbReference>
<dbReference type="Gene3D" id="6.10.140.1190">
    <property type="match status" value="1"/>
</dbReference>
<dbReference type="Gene3D" id="6.10.330.20">
    <property type="match status" value="1"/>
</dbReference>
<dbReference type="InterPro" id="IPR038340">
    <property type="entry name" value="MRP-L47_sf"/>
</dbReference>
<dbReference type="InterPro" id="IPR010729">
    <property type="entry name" value="Ribosomal_uL29_mit"/>
</dbReference>
<dbReference type="PANTHER" id="PTHR21183:SF18">
    <property type="entry name" value="LARGE RIBOSOMAL SUBUNIT PROTEIN UL29M"/>
    <property type="match status" value="1"/>
</dbReference>
<dbReference type="PANTHER" id="PTHR21183">
    <property type="entry name" value="RIBOSOMAL PROTEIN L47, MITOCHONDRIAL-RELATED"/>
    <property type="match status" value="1"/>
</dbReference>
<dbReference type="Pfam" id="PF06984">
    <property type="entry name" value="MRP-L47"/>
    <property type="match status" value="1"/>
</dbReference>
<comment type="subunit">
    <text evidence="1">Component of the mitochondrial large ribosomal subunit. Mature mitochondrial ribosomes consist of a small (37S) and a large (54S) subunit. The 37S subunit contains at least 33 different proteins and 1 molecule of RNA (15S). The 54S subunit contains at least 45 different proteins and 1 molecule of RNA (21S) (By similarity).</text>
</comment>
<comment type="subcellular location">
    <subcellularLocation>
        <location evidence="1">Mitochondrion</location>
    </subcellularLocation>
</comment>
<comment type="similarity">
    <text evidence="4">Belongs to the universal ribosomal protein uL29 family.</text>
</comment>
<reference key="1">
    <citation type="journal article" date="2004" name="Nature">
        <title>Genome evolution in yeasts.</title>
        <authorList>
            <person name="Dujon B."/>
            <person name="Sherman D."/>
            <person name="Fischer G."/>
            <person name="Durrens P."/>
            <person name="Casaregola S."/>
            <person name="Lafontaine I."/>
            <person name="de Montigny J."/>
            <person name="Marck C."/>
            <person name="Neuveglise C."/>
            <person name="Talla E."/>
            <person name="Goffard N."/>
            <person name="Frangeul L."/>
            <person name="Aigle M."/>
            <person name="Anthouard V."/>
            <person name="Babour A."/>
            <person name="Barbe V."/>
            <person name="Barnay S."/>
            <person name="Blanchin S."/>
            <person name="Beckerich J.-M."/>
            <person name="Beyne E."/>
            <person name="Bleykasten C."/>
            <person name="Boisrame A."/>
            <person name="Boyer J."/>
            <person name="Cattolico L."/>
            <person name="Confanioleri F."/>
            <person name="de Daruvar A."/>
            <person name="Despons L."/>
            <person name="Fabre E."/>
            <person name="Fairhead C."/>
            <person name="Ferry-Dumazet H."/>
            <person name="Groppi A."/>
            <person name="Hantraye F."/>
            <person name="Hennequin C."/>
            <person name="Jauniaux N."/>
            <person name="Joyet P."/>
            <person name="Kachouri R."/>
            <person name="Kerrest A."/>
            <person name="Koszul R."/>
            <person name="Lemaire M."/>
            <person name="Lesur I."/>
            <person name="Ma L."/>
            <person name="Muller H."/>
            <person name="Nicaud J.-M."/>
            <person name="Nikolski M."/>
            <person name="Oztas S."/>
            <person name="Ozier-Kalogeropoulos O."/>
            <person name="Pellenz S."/>
            <person name="Potier S."/>
            <person name="Richard G.-F."/>
            <person name="Straub M.-L."/>
            <person name="Suleau A."/>
            <person name="Swennen D."/>
            <person name="Tekaia F."/>
            <person name="Wesolowski-Louvel M."/>
            <person name="Westhof E."/>
            <person name="Wirth B."/>
            <person name="Zeniou-Meyer M."/>
            <person name="Zivanovic Y."/>
            <person name="Bolotin-Fukuhara M."/>
            <person name="Thierry A."/>
            <person name="Bouchier C."/>
            <person name="Caudron B."/>
            <person name="Scarpelli C."/>
            <person name="Gaillardin C."/>
            <person name="Weissenbach J."/>
            <person name="Wincker P."/>
            <person name="Souciet J.-L."/>
        </authorList>
    </citation>
    <scope>NUCLEOTIDE SEQUENCE [LARGE SCALE GENOMIC DNA]</scope>
    <source>
        <strain>ATCC 8585 / CBS 2359 / DSM 70799 / NBRC 1267 / NRRL Y-1140 / WM37</strain>
    </source>
</reference>
<name>RM04_KLULA</name>
<protein>
    <recommendedName>
        <fullName evidence="4">Large ribosomal subunit protein uL29m</fullName>
    </recommendedName>
    <alternativeName>
        <fullName>54S ribosomal protein L4, mitochondrial</fullName>
    </alternativeName>
</protein>
<accession>Q6CWC4</accession>
<proteinExistence type="inferred from homology"/>
<evidence type="ECO:0000250" key="1"/>
<evidence type="ECO:0000255" key="2"/>
<evidence type="ECO:0000256" key="3">
    <source>
        <dbReference type="SAM" id="MobiDB-lite"/>
    </source>
</evidence>
<evidence type="ECO:0000305" key="4"/>
<sequence length="332" mass="38674">MFPARRGLHTTSRACARTRFTKPKPKPAKRENVRLPTQRTHHDNDLKITAPIPPAAANLTCPDDHPLWQFFSEKKFLRTPEELDTLSRPWTIPELRRKSFTDLHSLWYTCLKERNVLARENHLVQFNFEAQTEAYQDISEKIRTTMWRIRHVLSERDWAFKIANEKFAVEKQVFIESFEKDFLEAPANEDEEIFESLQRFQYAIYGISEYIDENKVDRTFVDGLKAVATLKLKKFALRNEDIKNFLEESNNTIVDAGESFLLYTSENTESAIAEACQAVRELRENGSSVSRYDELETVQEYVNKLAEAQMAKVTEAEIQLQEEDAKNNANTL</sequence>
<gene>
    <name type="primary">MRPL4</name>
    <name type="ordered locus">KLLA0B05181g</name>
</gene>
<feature type="transit peptide" description="Mitochondrion" evidence="2">
    <location>
        <begin position="1"/>
        <end status="unknown"/>
    </location>
</feature>
<feature type="chain" id="PRO_0000372403" description="Large ribosomal subunit protein uL29m">
    <location>
        <begin status="unknown"/>
        <end position="332"/>
    </location>
</feature>
<feature type="region of interest" description="Disordered" evidence="3">
    <location>
        <begin position="19"/>
        <end position="40"/>
    </location>
</feature>
<feature type="coiled-coil region" evidence="2">
    <location>
        <begin position="264"/>
        <end position="327"/>
    </location>
</feature>
<organism>
    <name type="scientific">Kluyveromyces lactis (strain ATCC 8585 / CBS 2359 / DSM 70799 / NBRC 1267 / NRRL Y-1140 / WM37)</name>
    <name type="common">Yeast</name>
    <name type="synonym">Candida sphaerica</name>
    <dbReference type="NCBI Taxonomy" id="284590"/>
    <lineage>
        <taxon>Eukaryota</taxon>
        <taxon>Fungi</taxon>
        <taxon>Dikarya</taxon>
        <taxon>Ascomycota</taxon>
        <taxon>Saccharomycotina</taxon>
        <taxon>Saccharomycetes</taxon>
        <taxon>Saccharomycetales</taxon>
        <taxon>Saccharomycetaceae</taxon>
        <taxon>Kluyveromyces</taxon>
    </lineage>
</organism>